<accession>Q8L7V3</accession>
<accession>Q9FMJ2</accession>
<name>PMTQ_ARATH</name>
<protein>
    <recommendedName>
        <fullName>Probable methyltransferase PMT26</fullName>
        <ecNumber>2.1.1.-</ecNumber>
    </recommendedName>
</protein>
<feature type="chain" id="PRO_0000393266" description="Probable methyltransferase PMT26">
    <location>
        <begin position="1"/>
        <end position="829"/>
    </location>
</feature>
<feature type="topological domain" description="Cytoplasmic" evidence="1">
    <location>
        <begin position="1"/>
        <end position="17"/>
    </location>
</feature>
<feature type="transmembrane region" description="Helical; Signal-anchor for type II membrane protein" evidence="1">
    <location>
        <begin position="18"/>
        <end position="38"/>
    </location>
</feature>
<feature type="topological domain" description="Lumenal" evidence="1">
    <location>
        <begin position="39"/>
        <end position="829"/>
    </location>
</feature>
<feature type="region of interest" description="Disordered" evidence="2">
    <location>
        <begin position="55"/>
        <end position="258"/>
    </location>
</feature>
<feature type="region of interest" description="Disordered" evidence="2">
    <location>
        <begin position="271"/>
        <end position="291"/>
    </location>
</feature>
<feature type="compositionally biased region" description="Basic and acidic residues" evidence="2">
    <location>
        <begin position="85"/>
        <end position="143"/>
    </location>
</feature>
<feature type="compositionally biased region" description="Basic and acidic residues" evidence="2">
    <location>
        <begin position="151"/>
        <end position="160"/>
    </location>
</feature>
<feature type="compositionally biased region" description="Basic and acidic residues" evidence="2">
    <location>
        <begin position="168"/>
        <end position="177"/>
    </location>
</feature>
<feature type="compositionally biased region" description="Basic and acidic residues" evidence="2">
    <location>
        <begin position="187"/>
        <end position="231"/>
    </location>
</feature>
<feature type="compositionally biased region" description="Polar residues" evidence="2">
    <location>
        <begin position="241"/>
        <end position="252"/>
    </location>
</feature>
<feature type="compositionally biased region" description="Basic and acidic residues" evidence="2">
    <location>
        <begin position="280"/>
        <end position="291"/>
    </location>
</feature>
<feature type="glycosylation site" description="N-linked (GlcNAc...) asparagine" evidence="1">
    <location>
        <position position="215"/>
    </location>
</feature>
<feature type="glycosylation site" description="N-linked (GlcNAc...) asparagine" evidence="1">
    <location>
        <position position="247"/>
    </location>
</feature>
<feature type="glycosylation site" description="N-linked (GlcNAc...) asparagine" evidence="1">
    <location>
        <position position="264"/>
    </location>
</feature>
<feature type="glycosylation site" description="N-linked (GlcNAc...) asparagine" evidence="1">
    <location>
        <position position="270"/>
    </location>
</feature>
<feature type="glycosylation site" description="N-linked (GlcNAc...) asparagine" evidence="1">
    <location>
        <position position="302"/>
    </location>
</feature>
<feature type="glycosylation site" description="N-linked (GlcNAc...) asparagine" evidence="1">
    <location>
        <position position="579"/>
    </location>
</feature>
<feature type="glycosylation site" description="N-linked (GlcNAc...) asparagine" evidence="1">
    <location>
        <position position="595"/>
    </location>
</feature>
<feature type="glycosylation site" description="N-linked (GlcNAc...) asparagine" evidence="1">
    <location>
        <position position="756"/>
    </location>
</feature>
<sequence>MAQPRYTRIDNRRPSSNYCSTVTVVVFVALCLVGIWMMTSSSVGPAQNVDEVSLDNKDGIKKQMTPPAEEGNGQKFEDAPVETPNEDKKGDGDASLPKEDESSSKQDNQEEKKEEKTKEEFTPSSETKSETEGGEDQKDDSKSENGGGGDLDEKKDLKDNSDEENPDTNEKQTKPETEDNELGEDGENQKQFESDNGEKKSIDDDKKSSDDDKENKTGNEDTETKTEKENTETNVDVQVEQEGQSKNETSGDLSPPGAQLELLNETTAQNGSFSTQATESKNEKEAQKGSGDKLDYKWALCNTTAGPDYIPCLDNVQAIRSLPSTKHYEHRERHCPDSPPTCLVPLPDGYKRPIEWPKSREKIWYTNVPHTKLAEYKGHQNWVKVTGEYLTFPGGGTQFKHGALHYIDFIQESVPAIAWGKRSRVVLDVGCGVASFGGFLFDRDVITMSLAPKDEHEAQVQFALERGIPAISAVMGTTRLPFPGRVFDIVHCARCRVPWHIEGGKLLLELNRVLRPGGFFVWSATPVYQKKTEDVEIWKAMSELIKKMCWELVSINKDTINGVGVATYRKPTSNECYKNRSEPVPPICADSDDPNASWKVPLQACMHTAPEDKTQRGSQWPEQWPARLEKAPFWLSSSQTGVYGKAAPEDFSADYEHWKRVVTKSYLNGLGINWASVRNVMDMRAVYGGFAAALRDLKVWVMNVVPIDSPDTLAIIYERGLFGIYHDWCESFSTYPRSYDLLHADHLFSKLKQRCNLTAVIAEVDRVLRPEGKLIVRDDAETIQQVEGMVKAMKWEVRMTYSKEKEGLLSVQKSIWRPSEVETLTYAIG</sequence>
<organism>
    <name type="scientific">Arabidopsis thaliana</name>
    <name type="common">Mouse-ear cress</name>
    <dbReference type="NCBI Taxonomy" id="3702"/>
    <lineage>
        <taxon>Eukaryota</taxon>
        <taxon>Viridiplantae</taxon>
        <taxon>Streptophyta</taxon>
        <taxon>Embryophyta</taxon>
        <taxon>Tracheophyta</taxon>
        <taxon>Spermatophyta</taxon>
        <taxon>Magnoliopsida</taxon>
        <taxon>eudicotyledons</taxon>
        <taxon>Gunneridae</taxon>
        <taxon>Pentapetalae</taxon>
        <taxon>rosids</taxon>
        <taxon>malvids</taxon>
        <taxon>Brassicales</taxon>
        <taxon>Brassicaceae</taxon>
        <taxon>Camelineae</taxon>
        <taxon>Arabidopsis</taxon>
    </lineage>
</organism>
<proteinExistence type="evidence at transcript level"/>
<comment type="subcellular location">
    <subcellularLocation>
        <location evidence="3">Golgi apparatus membrane</location>
        <topology evidence="3">Single-pass type II membrane protein</topology>
    </subcellularLocation>
</comment>
<comment type="similarity">
    <text evidence="3">Belongs to the methyltransferase superfamily.</text>
</comment>
<comment type="sequence caution" evidence="3">
    <conflict type="erroneous gene model prediction">
        <sequence resource="EMBL-CDS" id="BAB10271"/>
    </conflict>
</comment>
<reference key="1">
    <citation type="journal article" date="1997" name="DNA Res.">
        <title>Structural analysis of Arabidopsis thaliana chromosome 5. III. Sequence features of the regions of 1,191,918 bp covered by seventeen physically assigned P1 clones.</title>
        <authorList>
            <person name="Nakamura Y."/>
            <person name="Sato S."/>
            <person name="Kaneko T."/>
            <person name="Kotani H."/>
            <person name="Asamizu E."/>
            <person name="Miyajima N."/>
            <person name="Tabata S."/>
        </authorList>
    </citation>
    <scope>NUCLEOTIDE SEQUENCE [LARGE SCALE GENOMIC DNA]</scope>
    <source>
        <strain>cv. Columbia</strain>
    </source>
</reference>
<reference key="2">
    <citation type="journal article" date="2000" name="DNA Res.">
        <title>Structural analysis of Arabidopsis thaliana chromosome 5. X. Sequence features of the regions of 3,076,755 bp covered by sixty P1 and TAC clones.</title>
        <authorList>
            <person name="Sato S."/>
            <person name="Nakamura Y."/>
            <person name="Kaneko T."/>
            <person name="Katoh T."/>
            <person name="Asamizu E."/>
            <person name="Kotani H."/>
            <person name="Tabata S."/>
        </authorList>
    </citation>
    <scope>NUCLEOTIDE SEQUENCE [LARGE SCALE GENOMIC DNA]</scope>
    <source>
        <strain>cv. Columbia</strain>
    </source>
</reference>
<reference key="3">
    <citation type="journal article" date="2017" name="Plant J.">
        <title>Araport11: a complete reannotation of the Arabidopsis thaliana reference genome.</title>
        <authorList>
            <person name="Cheng C.Y."/>
            <person name="Krishnakumar V."/>
            <person name="Chan A.P."/>
            <person name="Thibaud-Nissen F."/>
            <person name="Schobel S."/>
            <person name="Town C.D."/>
        </authorList>
    </citation>
    <scope>GENOME REANNOTATION</scope>
    <source>
        <strain>cv. Columbia</strain>
    </source>
</reference>
<reference key="4">
    <citation type="journal article" date="2003" name="Science">
        <title>Empirical analysis of transcriptional activity in the Arabidopsis genome.</title>
        <authorList>
            <person name="Yamada K."/>
            <person name="Lim J."/>
            <person name="Dale J.M."/>
            <person name="Chen H."/>
            <person name="Shinn P."/>
            <person name="Palm C.J."/>
            <person name="Southwick A.M."/>
            <person name="Wu H.C."/>
            <person name="Kim C.J."/>
            <person name="Nguyen M."/>
            <person name="Pham P.K."/>
            <person name="Cheuk R.F."/>
            <person name="Karlin-Newmann G."/>
            <person name="Liu S.X."/>
            <person name="Lam B."/>
            <person name="Sakano H."/>
            <person name="Wu T."/>
            <person name="Yu G."/>
            <person name="Miranda M."/>
            <person name="Quach H.L."/>
            <person name="Tripp M."/>
            <person name="Chang C.H."/>
            <person name="Lee J.M."/>
            <person name="Toriumi M.J."/>
            <person name="Chan M.M."/>
            <person name="Tang C.C."/>
            <person name="Onodera C.S."/>
            <person name="Deng J.M."/>
            <person name="Akiyama K."/>
            <person name="Ansari Y."/>
            <person name="Arakawa T."/>
            <person name="Banh J."/>
            <person name="Banno F."/>
            <person name="Bowser L."/>
            <person name="Brooks S.Y."/>
            <person name="Carninci P."/>
            <person name="Chao Q."/>
            <person name="Choy N."/>
            <person name="Enju A."/>
            <person name="Goldsmith A.D."/>
            <person name="Gurjal M."/>
            <person name="Hansen N.F."/>
            <person name="Hayashizaki Y."/>
            <person name="Johnson-Hopson C."/>
            <person name="Hsuan V.W."/>
            <person name="Iida K."/>
            <person name="Karnes M."/>
            <person name="Khan S."/>
            <person name="Koesema E."/>
            <person name="Ishida J."/>
            <person name="Jiang P.X."/>
            <person name="Jones T."/>
            <person name="Kawai J."/>
            <person name="Kamiya A."/>
            <person name="Meyers C."/>
            <person name="Nakajima M."/>
            <person name="Narusaka M."/>
            <person name="Seki M."/>
            <person name="Sakurai T."/>
            <person name="Satou M."/>
            <person name="Tamse R."/>
            <person name="Vaysberg M."/>
            <person name="Wallender E.K."/>
            <person name="Wong C."/>
            <person name="Yamamura Y."/>
            <person name="Yuan S."/>
            <person name="Shinozaki K."/>
            <person name="Davis R.W."/>
            <person name="Theologis A."/>
            <person name="Ecker J.R."/>
        </authorList>
    </citation>
    <scope>NUCLEOTIDE SEQUENCE [LARGE SCALE MRNA]</scope>
    <source>
        <strain>cv. Columbia</strain>
    </source>
</reference>
<reference key="5">
    <citation type="journal article" date="2007" name="Plant J.">
        <title>The TUMOROUS SHOOT DEVELOPMENT2 gene of Arabidopsis encoding a putative methyltransferase is required for cell adhesion and co-ordinated plant development.</title>
        <authorList>
            <person name="Krupkova E."/>
            <person name="Immerzeel P."/>
            <person name="Pauly M."/>
            <person name="Schmulling T."/>
        </authorList>
    </citation>
    <scope>GENE FAMILY</scope>
</reference>
<keyword id="KW-0325">Glycoprotein</keyword>
<keyword id="KW-0333">Golgi apparatus</keyword>
<keyword id="KW-0472">Membrane</keyword>
<keyword id="KW-0489">Methyltransferase</keyword>
<keyword id="KW-1185">Reference proteome</keyword>
<keyword id="KW-0735">Signal-anchor</keyword>
<keyword id="KW-0808">Transferase</keyword>
<keyword id="KW-0812">Transmembrane</keyword>
<keyword id="KW-1133">Transmembrane helix</keyword>
<dbReference type="EC" id="2.1.1.-"/>
<dbReference type="EMBL" id="AB008266">
    <property type="protein sequence ID" value="BAB10271.1"/>
    <property type="status" value="ALT_SEQ"/>
    <property type="molecule type" value="Genomic_DNA"/>
</dbReference>
<dbReference type="EMBL" id="AB019227">
    <property type="protein sequence ID" value="BAB10271.1"/>
    <property type="status" value="JOINED"/>
    <property type="molecule type" value="Genomic_DNA"/>
</dbReference>
<dbReference type="EMBL" id="CP002688">
    <property type="protein sequence ID" value="AED97831.1"/>
    <property type="molecule type" value="Genomic_DNA"/>
</dbReference>
<dbReference type="EMBL" id="AY125524">
    <property type="protein sequence ID" value="AAM78114.1"/>
    <property type="molecule type" value="mRNA"/>
</dbReference>
<dbReference type="EMBL" id="BT003013">
    <property type="protein sequence ID" value="AAO23578.1"/>
    <property type="molecule type" value="mRNA"/>
</dbReference>
<dbReference type="RefSeq" id="NP_201208.2">
    <property type="nucleotide sequence ID" value="NM_125799.4"/>
</dbReference>
<dbReference type="FunCoup" id="Q8L7V3">
    <property type="interactions" value="1361"/>
</dbReference>
<dbReference type="STRING" id="3702.Q8L7V3"/>
<dbReference type="GlyGen" id="Q8L7V3">
    <property type="glycosylation" value="8 sites"/>
</dbReference>
<dbReference type="iPTMnet" id="Q8L7V3"/>
<dbReference type="SwissPalm" id="Q8L7V3"/>
<dbReference type="PaxDb" id="3702-AT5G64030.1"/>
<dbReference type="ProteomicsDB" id="234788"/>
<dbReference type="EnsemblPlants" id="AT5G64030.1">
    <property type="protein sequence ID" value="AT5G64030.1"/>
    <property type="gene ID" value="AT5G64030"/>
</dbReference>
<dbReference type="GeneID" id="836524"/>
<dbReference type="Gramene" id="AT5G64030.1">
    <property type="protein sequence ID" value="AT5G64030.1"/>
    <property type="gene ID" value="AT5G64030"/>
</dbReference>
<dbReference type="KEGG" id="ath:AT5G64030"/>
<dbReference type="Araport" id="AT5G64030"/>
<dbReference type="TAIR" id="AT5G64030"/>
<dbReference type="eggNOG" id="ENOG502QQH0">
    <property type="taxonomic scope" value="Eukaryota"/>
</dbReference>
<dbReference type="HOGENOM" id="CLU_010485_1_2_1"/>
<dbReference type="InParanoid" id="Q8L7V3"/>
<dbReference type="OMA" id="QNDGDAN"/>
<dbReference type="PhylomeDB" id="Q8L7V3"/>
<dbReference type="PRO" id="PR:Q8L7V3"/>
<dbReference type="Proteomes" id="UP000006548">
    <property type="component" value="Chromosome 5"/>
</dbReference>
<dbReference type="ExpressionAtlas" id="Q8L7V3">
    <property type="expression patterns" value="baseline and differential"/>
</dbReference>
<dbReference type="GO" id="GO:0005768">
    <property type="term" value="C:endosome"/>
    <property type="evidence" value="ECO:0007005"/>
    <property type="project" value="TAIR"/>
</dbReference>
<dbReference type="GO" id="GO:0005794">
    <property type="term" value="C:Golgi apparatus"/>
    <property type="evidence" value="ECO:0007005"/>
    <property type="project" value="TAIR"/>
</dbReference>
<dbReference type="GO" id="GO:0005797">
    <property type="term" value="C:Golgi medial cisterna"/>
    <property type="evidence" value="ECO:0007005"/>
    <property type="project" value="TAIR"/>
</dbReference>
<dbReference type="GO" id="GO:0000139">
    <property type="term" value="C:Golgi membrane"/>
    <property type="evidence" value="ECO:0007669"/>
    <property type="project" value="UniProtKB-SubCell"/>
</dbReference>
<dbReference type="GO" id="GO:0009536">
    <property type="term" value="C:plastid"/>
    <property type="evidence" value="ECO:0007005"/>
    <property type="project" value="TAIR"/>
</dbReference>
<dbReference type="GO" id="GO:0005802">
    <property type="term" value="C:trans-Golgi network"/>
    <property type="evidence" value="ECO:0007005"/>
    <property type="project" value="TAIR"/>
</dbReference>
<dbReference type="GO" id="GO:0008168">
    <property type="term" value="F:methyltransferase activity"/>
    <property type="evidence" value="ECO:0007669"/>
    <property type="project" value="UniProtKB-KW"/>
</dbReference>
<dbReference type="GO" id="GO:0032259">
    <property type="term" value="P:methylation"/>
    <property type="evidence" value="ECO:0007669"/>
    <property type="project" value="UniProtKB-KW"/>
</dbReference>
<dbReference type="CDD" id="cd02440">
    <property type="entry name" value="AdoMet_MTases"/>
    <property type="match status" value="1"/>
</dbReference>
<dbReference type="FunFam" id="3.40.50.150:FF:000084">
    <property type="entry name" value="probable methyltransferase PMT23"/>
    <property type="match status" value="1"/>
</dbReference>
<dbReference type="Gene3D" id="3.40.50.150">
    <property type="entry name" value="Vaccinia Virus protein VP39"/>
    <property type="match status" value="1"/>
</dbReference>
<dbReference type="InterPro" id="IPR004159">
    <property type="entry name" value="Put_SAM_MeTrfase"/>
</dbReference>
<dbReference type="InterPro" id="IPR029063">
    <property type="entry name" value="SAM-dependent_MTases_sf"/>
</dbReference>
<dbReference type="PANTHER" id="PTHR10108:SF1130">
    <property type="entry name" value="METHYLTRANSFERASE PMT26-RELATED"/>
    <property type="match status" value="1"/>
</dbReference>
<dbReference type="PANTHER" id="PTHR10108">
    <property type="entry name" value="SAM-DEPENDENT METHYLTRANSFERASE"/>
    <property type="match status" value="1"/>
</dbReference>
<dbReference type="Pfam" id="PF03141">
    <property type="entry name" value="Methyltransf_29"/>
    <property type="match status" value="1"/>
</dbReference>
<dbReference type="SUPFAM" id="SSF53335">
    <property type="entry name" value="S-adenosyl-L-methionine-dependent methyltransferases"/>
    <property type="match status" value="2"/>
</dbReference>
<evidence type="ECO:0000255" key="1"/>
<evidence type="ECO:0000256" key="2">
    <source>
        <dbReference type="SAM" id="MobiDB-lite"/>
    </source>
</evidence>
<evidence type="ECO:0000305" key="3"/>
<gene>
    <name type="ordered locus">At5g64030</name>
    <name type="ORF">MBM17.13</name>
</gene>